<comment type="function">
    <text evidence="1">Component of the helicase/primase complex. Unwinds the DNA at the replication forks and generates single-stranded DNA for both leading and lagging strand synthesis. The primase synthesizes short RNA primers on the lagging strand that the polymerase presumably elongates using dNTPs. The primase-associated factor has no known catalytic activity in the complex and may serve to facilitate the formation of the replisome by directly interacting with the origin-binding protein and the polymerase.</text>
</comment>
<comment type="subunit">
    <text evidence="1">Associates with the primase and the helicase to form the helicase-primase complex. Interacts with the origin-binding protein. Interacts with the polymerase catalytic subunit.</text>
</comment>
<comment type="subcellular location">
    <subcellularLocation>
        <location evidence="1">Host nucleus</location>
    </subcellularLocation>
</comment>
<comment type="similarity">
    <text evidence="1">Belongs to the herpesviridae HEPA family.</text>
</comment>
<feature type="chain" id="PRO_0000115857" description="DNA helicase/primase complex-associated protein">
    <location>
        <begin position="1"/>
        <end position="752"/>
    </location>
</feature>
<proteinExistence type="inferred from homology"/>
<keyword id="KW-0235">DNA replication</keyword>
<keyword id="KW-1048">Host nucleus</keyword>
<keyword id="KW-1185">Reference proteome</keyword>
<gene>
    <name type="ORF">UL8</name>
</gene>
<organismHost>
    <name type="scientific">Homo sapiens</name>
    <name type="common">Human</name>
    <dbReference type="NCBI Taxonomy" id="9606"/>
</organismHost>
<accession>P89431</accession>
<sequence length="752" mass="80027">MEAPGIVWVEESVSAITLYAVWLPPRTRDCLHALLYLVCRDAAGEARARFAEVSVGSSDLQDFYGSPDVSAPGAVAAARAATAPAASPLEPLGDPTLWRALYACVLAALERQTGRWALFVPLRLGWDPQTGLVVRVERASWGPPAAPRAALLDVEAKVDVDPLALSARVAEHPGARLAWARLAAIRDSPQCASSASLAVTITTRTARFAREYTTLAFPPTRKEGAFADLVEVCEVGLRPRGHPQRVTARVLLPRGYDYFVSAGDGFSAPALVALFRQWHTTVHAAPGALAPVFAFLGPGFEVRGGPVQYFAVLGFPGWPTFTVPAAAAAESARDLVRGAAATHAACLGAWPAVGARVVLPPRAWPAVASEAAGRLLPAFREAVARWHPTATTIQLLDPPAAVGPVWTARFCFSGLQAQLLAALAGLGEAGLPEARGRAGLERLDALVAAAPSEPWARAVLERLVPDACDACPALRQLLGGVMAAVCLQIEQTASSVKFAVCGGTGAAFWGLFNVDPGDADAAHGAIQDARRALEASVRAVLSANGIRPRLAPSLAPEGVYTHVVTWSQTGAWFWNSRDDTDFLQGFPLRGAAYAAAAEVMRDALRRILRRPAAGPPEEAVCAARGVMEDACDRFVLDAFGRRLDAEYWSVLTPPGEADDPLPQTAFRGGALLDAEQYWRRVVRVCPGGGESVGVPVDLYPRPLVLPPVDCAHHLREILREIQLVFTGVLEGVWGEGGSFVYPFDEKIRFLFP</sequence>
<reference key="1">
    <citation type="journal article" date="1998" name="J. Virol.">
        <title>The genome sequence of herpes simplex virus type 2.</title>
        <authorList>
            <person name="Dolan A."/>
            <person name="Jamieson F.E."/>
            <person name="Cunningham C."/>
            <person name="Barnett B.C."/>
            <person name="McGeoch D.J."/>
        </authorList>
    </citation>
    <scope>NUCLEOTIDE SEQUENCE [LARGE SCALE GENOMIC DNA]</scope>
</reference>
<organism>
    <name type="scientific">Human herpesvirus 2 (strain HG52)</name>
    <name type="common">HHV-2</name>
    <name type="synonym">Human herpes simplex virus 2</name>
    <dbReference type="NCBI Taxonomy" id="10315"/>
    <lineage>
        <taxon>Viruses</taxon>
        <taxon>Duplodnaviria</taxon>
        <taxon>Heunggongvirae</taxon>
        <taxon>Peploviricota</taxon>
        <taxon>Herviviricetes</taxon>
        <taxon>Herpesvirales</taxon>
        <taxon>Orthoherpesviridae</taxon>
        <taxon>Alphaherpesvirinae</taxon>
        <taxon>Simplexvirus</taxon>
        <taxon>Simplexvirus humanalpha2</taxon>
        <taxon>Human herpesvirus 2</taxon>
    </lineage>
</organism>
<evidence type="ECO:0000255" key="1">
    <source>
        <dbReference type="HAMAP-Rule" id="MF_04010"/>
    </source>
</evidence>
<protein>
    <recommendedName>
        <fullName evidence="1">DNA helicase/primase complex-associated protein</fullName>
        <shortName evidence="1">HEPA</shortName>
    </recommendedName>
    <alternativeName>
        <fullName evidence="1">Primase-associated factor</fullName>
    </alternativeName>
</protein>
<name>HEPA_HHV2H</name>
<dbReference type="EMBL" id="Z86099">
    <property type="protein sequence ID" value="CAB06768.1"/>
    <property type="molecule type" value="Genomic_DNA"/>
</dbReference>
<dbReference type="ChEMBL" id="CHEMBL4630722"/>
<dbReference type="Proteomes" id="UP000001874">
    <property type="component" value="Segment"/>
</dbReference>
<dbReference type="GO" id="GO:0042025">
    <property type="term" value="C:host cell nucleus"/>
    <property type="evidence" value="ECO:0007669"/>
    <property type="project" value="UniProtKB-SubCell"/>
</dbReference>
<dbReference type="GO" id="GO:0006260">
    <property type="term" value="P:DNA replication"/>
    <property type="evidence" value="ECO:0007669"/>
    <property type="project" value="UniProtKB-KW"/>
</dbReference>
<dbReference type="GO" id="GO:0019079">
    <property type="term" value="P:viral genome replication"/>
    <property type="evidence" value="ECO:0007669"/>
    <property type="project" value="InterPro"/>
</dbReference>
<dbReference type="HAMAP" id="MF_04010">
    <property type="entry name" value="HSV_HEPA"/>
    <property type="match status" value="1"/>
</dbReference>
<dbReference type="InterPro" id="IPR004996">
    <property type="entry name" value="HSV_HEPA"/>
</dbReference>
<dbReference type="Pfam" id="PF03324">
    <property type="entry name" value="Herpes_HEPA"/>
    <property type="match status" value="1"/>
</dbReference>